<name>CR19_RANCH</name>
<organism>
    <name type="scientific">Ranoidea chloris</name>
    <name type="common">Red-eyed tree frog</name>
    <name type="synonym">Litoria chloris</name>
    <dbReference type="NCBI Taxonomy" id="86064"/>
    <lineage>
        <taxon>Eukaryota</taxon>
        <taxon>Metazoa</taxon>
        <taxon>Chordata</taxon>
        <taxon>Craniata</taxon>
        <taxon>Vertebrata</taxon>
        <taxon>Euteleostomi</taxon>
        <taxon>Amphibia</taxon>
        <taxon>Batrachia</taxon>
        <taxon>Anura</taxon>
        <taxon>Neobatrachia</taxon>
        <taxon>Hyloidea</taxon>
        <taxon>Hylidae</taxon>
        <taxon>Pelodryadinae</taxon>
        <taxon>Ranoidea</taxon>
    </lineage>
</organism>
<sequence length="25" mass="2594">GLFGVLGSIAKHVLPHVVPVIAEKL</sequence>
<protein>
    <recommendedName>
        <fullName evidence="4">Caerin-1.9</fullName>
    </recommendedName>
</protein>
<reference key="1">
    <citation type="journal article" date="1998" name="J. Pept. Res.">
        <title>New antibiotic caerin 1 peptides from the skin secretion of the Australian tree frog Litoria chloris. Comparison of the activities of the caerin 1 peptides from the genus Litoria.</title>
        <authorList>
            <person name="Steinborner S.T."/>
            <person name="Currie G.J."/>
            <person name="Bowie J.H."/>
            <person name="Wallace J.C."/>
            <person name="Tyler M.J."/>
        </authorList>
    </citation>
    <scope>PROTEIN SEQUENCE</scope>
    <scope>AMIDATION AT LEU-25</scope>
    <scope>SUBCELLULAR LOCATION</scope>
    <source>
        <tissue>Skin secretion</tissue>
    </source>
</reference>
<reference key="2">
    <citation type="journal article" date="2002" name="Eur. J. Biochem.">
        <title>Amphibian peptides that inhibit neuronal nitric oxide synthase. Isolation of lesuerin from the skin secretion of the Australian stony creek frog Litoria lesueuri.</title>
        <authorList>
            <person name="Doyle J."/>
            <person name="Llewellyn L.E."/>
            <person name="Brinkworth C.S."/>
            <person name="Bowie J.H."/>
            <person name="Wegener K.L."/>
            <person name="Rozek T."/>
            <person name="Wabnitz P.A."/>
            <person name="Wallace J.C."/>
            <person name="Tyler M.J."/>
        </authorList>
    </citation>
    <scope>FUNCTION</scope>
</reference>
<comment type="function">
    <text evidence="2 3">Antimicrobial peptide (PubMed:9516047). Adopts an alpha helical conformation which can disrupt bacterial membranes (PubMed:9516047). Strongly inhibits the formation of NO by neuronal nitric oxide synthase (nNOS) at micromolar concentrations (PubMed:11784303). Acts by a non-competitive mechanism, probably by binding to calcium/calmodulin and as a consequence blocking calmodulin attachment to nNOS (PubMed:11784303).</text>
</comment>
<comment type="subcellular location">
    <subcellularLocation>
        <location evidence="3">Secreted</location>
    </subcellularLocation>
</comment>
<comment type="tissue specificity">
    <text evidence="6">Expressed by the skin dorsal glands.</text>
</comment>
<comment type="domain">
    <text evidence="1">Contains two amphipathic alpha helix regions separated by a region of less-defined helicity and greater flexibility.</text>
</comment>
<comment type="similarity">
    <text evidence="5">Belongs to the frog skin active peptide (FSAP) family. Caerin subfamily.</text>
</comment>
<keyword id="KW-0027">Amidation</keyword>
<keyword id="KW-0878">Amphibian defense peptide</keyword>
<keyword id="KW-0044">Antibiotic</keyword>
<keyword id="KW-0929">Antimicrobial</keyword>
<keyword id="KW-0903">Direct protein sequencing</keyword>
<keyword id="KW-0391">Immunity</keyword>
<keyword id="KW-0399">Innate immunity</keyword>
<keyword id="KW-0964">Secreted</keyword>
<proteinExistence type="evidence at protein level"/>
<evidence type="ECO:0000250" key="1"/>
<evidence type="ECO:0000269" key="2">
    <source>
    </source>
</evidence>
<evidence type="ECO:0000269" key="3">
    <source>
    </source>
</evidence>
<evidence type="ECO:0000303" key="4">
    <source>
    </source>
</evidence>
<evidence type="ECO:0000305" key="5"/>
<evidence type="ECO:0000305" key="6">
    <source>
    </source>
</evidence>
<accession>P81252</accession>
<feature type="peptide" id="PRO_0000043740" description="Caerin-1.9" evidence="3">
    <location>
        <begin position="1"/>
        <end position="25"/>
    </location>
</feature>
<feature type="modified residue" description="Leucine amide" evidence="3">
    <location>
        <position position="25"/>
    </location>
</feature>
<dbReference type="GO" id="GO:0005576">
    <property type="term" value="C:extracellular region"/>
    <property type="evidence" value="ECO:0007669"/>
    <property type="project" value="UniProtKB-SubCell"/>
</dbReference>
<dbReference type="GO" id="GO:0042742">
    <property type="term" value="P:defense response to bacterium"/>
    <property type="evidence" value="ECO:0007669"/>
    <property type="project" value="UniProtKB-KW"/>
</dbReference>
<dbReference type="GO" id="GO:0045087">
    <property type="term" value="P:innate immune response"/>
    <property type="evidence" value="ECO:0007669"/>
    <property type="project" value="UniProtKB-KW"/>
</dbReference>
<dbReference type="InterPro" id="IPR010000">
    <property type="entry name" value="Caerin_1"/>
</dbReference>
<dbReference type="Pfam" id="PF07440">
    <property type="entry name" value="Caerin_1"/>
    <property type="match status" value="1"/>
</dbReference>